<sequence>MNKVIVTGAQWGDEGKGRIVDLLAEAADCVVRFNGGHNAGHTLVVGGKTWKLALLPCGLLRGKLGVIGNGVVVDPQALLAEIDRIAAEGLAITPDTLAIADNATLLLPSHIALDAAQEAARAQAIGTTGRGIGPAFEDRAGRRAIRLADLADPAVLRERLAEALRYHNAVLAALGRPACELEPMLAALLEQARRILPYLRPAWKLLSEADEAGRRILFEGAQAMLLDVEHGTYPFVTSSGTGPAQAASGSGLGSAARGHALGVCKAYATRVGGGPFPTELDDAVGARLREKGGEYGTNTGRPRRCGWLDAALLRQSVRVGGMSSLALTKLDVLDGLDELRICTGYRVDGVLRDDYPAGLAERGRVAPVYETLPGWQESTRGARSLDALPEAARAYVRRIAELAGAPVSLISTGAERDDVIRLADPWMPASGG</sequence>
<comment type="function">
    <text evidence="1">Plays an important role in the de novo pathway of purine nucleotide biosynthesis. Catalyzes the first committed step in the biosynthesis of AMP from IMP.</text>
</comment>
<comment type="catalytic activity">
    <reaction evidence="1">
        <text>IMP + L-aspartate + GTP = N(6)-(1,2-dicarboxyethyl)-AMP + GDP + phosphate + 2 H(+)</text>
        <dbReference type="Rhea" id="RHEA:15753"/>
        <dbReference type="ChEBI" id="CHEBI:15378"/>
        <dbReference type="ChEBI" id="CHEBI:29991"/>
        <dbReference type="ChEBI" id="CHEBI:37565"/>
        <dbReference type="ChEBI" id="CHEBI:43474"/>
        <dbReference type="ChEBI" id="CHEBI:57567"/>
        <dbReference type="ChEBI" id="CHEBI:58053"/>
        <dbReference type="ChEBI" id="CHEBI:58189"/>
        <dbReference type="EC" id="6.3.4.4"/>
    </reaction>
</comment>
<comment type="cofactor">
    <cofactor evidence="1">
        <name>Mg(2+)</name>
        <dbReference type="ChEBI" id="CHEBI:18420"/>
    </cofactor>
    <text evidence="1">Binds 1 Mg(2+) ion per subunit.</text>
</comment>
<comment type="pathway">
    <text evidence="1">Purine metabolism; AMP biosynthesis via de novo pathway; AMP from IMP: step 1/2.</text>
</comment>
<comment type="subunit">
    <text evidence="1">Homodimer.</text>
</comment>
<comment type="subcellular location">
    <subcellularLocation>
        <location evidence="1">Cytoplasm</location>
    </subcellularLocation>
</comment>
<comment type="similarity">
    <text evidence="1">Belongs to the adenylosuccinate synthetase family.</text>
</comment>
<gene>
    <name evidence="1" type="primary">purA1</name>
    <name type="ordered locus">CV_0697</name>
</gene>
<proteinExistence type="inferred from homology"/>
<accession>Q7P071</accession>
<reference key="1">
    <citation type="journal article" date="2003" name="Proc. Natl. Acad. Sci. U.S.A.">
        <title>The complete genome sequence of Chromobacterium violaceum reveals remarkable and exploitable bacterial adaptability.</title>
        <authorList>
            <person name="Vasconcelos A.T.R."/>
            <person name="de Almeida D.F."/>
            <person name="Hungria M."/>
            <person name="Guimaraes C.T."/>
            <person name="Antonio R.V."/>
            <person name="Almeida F.C."/>
            <person name="de Almeida L.G.P."/>
            <person name="de Almeida R."/>
            <person name="Alves-Gomes J.A."/>
            <person name="Andrade E.M."/>
            <person name="Araripe J."/>
            <person name="de Araujo M.F.F."/>
            <person name="Astolfi-Filho S."/>
            <person name="Azevedo V."/>
            <person name="Baptista A.J."/>
            <person name="Bataus L.A.M."/>
            <person name="Batista J.S."/>
            <person name="Belo A."/>
            <person name="van den Berg C."/>
            <person name="Bogo M."/>
            <person name="Bonatto S."/>
            <person name="Bordignon J."/>
            <person name="Brigido M.M."/>
            <person name="Brito C.A."/>
            <person name="Brocchi M."/>
            <person name="Burity H.A."/>
            <person name="Camargo A.A."/>
            <person name="Cardoso D.D.P."/>
            <person name="Carneiro N.P."/>
            <person name="Carraro D.M."/>
            <person name="Carvalho C.M.B."/>
            <person name="Cascardo J.C.M."/>
            <person name="Cavada B.S."/>
            <person name="Chueire L.M.O."/>
            <person name="Creczynski-Pasa T.B."/>
            <person name="Cunha-Junior N.C."/>
            <person name="Fagundes N."/>
            <person name="Falcao C.L."/>
            <person name="Fantinatti F."/>
            <person name="Farias I.P."/>
            <person name="Felipe M.S.S."/>
            <person name="Ferrari L.P."/>
            <person name="Ferro J.A."/>
            <person name="Ferro M.I.T."/>
            <person name="Franco G.R."/>
            <person name="Freitas N.S.A."/>
            <person name="Furlan L.R."/>
            <person name="Gazzinelli R.T."/>
            <person name="Gomes E.A."/>
            <person name="Goncalves P.R."/>
            <person name="Grangeiro T.B."/>
            <person name="Grattapaglia D."/>
            <person name="Grisard E.C."/>
            <person name="Hanna E.S."/>
            <person name="Jardim S.N."/>
            <person name="Laurino J."/>
            <person name="Leoi L.C.T."/>
            <person name="Lima L.F.A."/>
            <person name="Loureiro M.F."/>
            <person name="Lyra M.C.C.P."/>
            <person name="Madeira H.M.F."/>
            <person name="Manfio G.P."/>
            <person name="Maranhao A.Q."/>
            <person name="Martins W.S."/>
            <person name="di Mauro S.M.Z."/>
            <person name="de Medeiros S.R.B."/>
            <person name="Meissner R.V."/>
            <person name="Moreira M.A.M."/>
            <person name="Nascimento F.F."/>
            <person name="Nicolas M.F."/>
            <person name="Oliveira J.G."/>
            <person name="Oliveira S.C."/>
            <person name="Paixao R.F.C."/>
            <person name="Parente J.A."/>
            <person name="Pedrosa F.O."/>
            <person name="Pena S.D.J."/>
            <person name="Pereira J.O."/>
            <person name="Pereira M."/>
            <person name="Pinto L.S.R.C."/>
            <person name="Pinto L.S."/>
            <person name="Porto J.I.R."/>
            <person name="Potrich D.P."/>
            <person name="Ramalho-Neto C.E."/>
            <person name="Reis A.M.M."/>
            <person name="Rigo L.U."/>
            <person name="Rondinelli E."/>
            <person name="Santos E.B.P."/>
            <person name="Santos F.R."/>
            <person name="Schneider M.P.C."/>
            <person name="Seuanez H.N."/>
            <person name="Silva A.M.R."/>
            <person name="da Silva A.L.C."/>
            <person name="Silva D.W."/>
            <person name="Silva R."/>
            <person name="Simoes I.C."/>
            <person name="Simon D."/>
            <person name="Soares C.M.A."/>
            <person name="Soares R.B.A."/>
            <person name="Souza E.M."/>
            <person name="Souza K.R.L."/>
            <person name="Souza R.C."/>
            <person name="Steffens M.B.R."/>
            <person name="Steindel M."/>
            <person name="Teixeira S.R."/>
            <person name="Urmenyi T."/>
            <person name="Vettore A."/>
            <person name="Wassem R."/>
            <person name="Zaha A."/>
            <person name="Simpson A.J.G."/>
        </authorList>
    </citation>
    <scope>NUCLEOTIDE SEQUENCE [LARGE SCALE GENOMIC DNA]</scope>
    <source>
        <strain>ATCC 12472 / DSM 30191 / JCM 1249 / CCUG 213 / NBRC 12614 / NCIMB 9131 / NCTC 9757 / MK</strain>
    </source>
</reference>
<evidence type="ECO:0000255" key="1">
    <source>
        <dbReference type="HAMAP-Rule" id="MF_00011"/>
    </source>
</evidence>
<dbReference type="EC" id="6.3.4.4" evidence="1"/>
<dbReference type="EMBL" id="AE016825">
    <property type="protein sequence ID" value="AAQ58373.1"/>
    <property type="molecule type" value="Genomic_DNA"/>
</dbReference>
<dbReference type="RefSeq" id="WP_011134252.1">
    <property type="nucleotide sequence ID" value="NC_005085.1"/>
</dbReference>
<dbReference type="SMR" id="Q7P071"/>
<dbReference type="STRING" id="243365.CV_0697"/>
<dbReference type="KEGG" id="cvi:CV_0697"/>
<dbReference type="eggNOG" id="COG0104">
    <property type="taxonomic scope" value="Bacteria"/>
</dbReference>
<dbReference type="HOGENOM" id="CLU_029848_0_0_4"/>
<dbReference type="OrthoDB" id="9807553at2"/>
<dbReference type="UniPathway" id="UPA00075">
    <property type="reaction ID" value="UER00335"/>
</dbReference>
<dbReference type="Proteomes" id="UP000001424">
    <property type="component" value="Chromosome"/>
</dbReference>
<dbReference type="GO" id="GO:0005737">
    <property type="term" value="C:cytoplasm"/>
    <property type="evidence" value="ECO:0007669"/>
    <property type="project" value="UniProtKB-SubCell"/>
</dbReference>
<dbReference type="GO" id="GO:0004019">
    <property type="term" value="F:adenylosuccinate synthase activity"/>
    <property type="evidence" value="ECO:0007669"/>
    <property type="project" value="UniProtKB-UniRule"/>
</dbReference>
<dbReference type="GO" id="GO:0005525">
    <property type="term" value="F:GTP binding"/>
    <property type="evidence" value="ECO:0007669"/>
    <property type="project" value="UniProtKB-UniRule"/>
</dbReference>
<dbReference type="GO" id="GO:0000287">
    <property type="term" value="F:magnesium ion binding"/>
    <property type="evidence" value="ECO:0007669"/>
    <property type="project" value="UniProtKB-UniRule"/>
</dbReference>
<dbReference type="GO" id="GO:0044208">
    <property type="term" value="P:'de novo' AMP biosynthetic process"/>
    <property type="evidence" value="ECO:0007669"/>
    <property type="project" value="UniProtKB-UniRule"/>
</dbReference>
<dbReference type="GO" id="GO:0046040">
    <property type="term" value="P:IMP metabolic process"/>
    <property type="evidence" value="ECO:0007669"/>
    <property type="project" value="TreeGrafter"/>
</dbReference>
<dbReference type="CDD" id="cd03108">
    <property type="entry name" value="AdSS"/>
    <property type="match status" value="1"/>
</dbReference>
<dbReference type="FunFam" id="1.10.300.10:FF:000001">
    <property type="entry name" value="Adenylosuccinate synthetase"/>
    <property type="match status" value="1"/>
</dbReference>
<dbReference type="FunFam" id="3.90.170.10:FF:000001">
    <property type="entry name" value="Adenylosuccinate synthetase"/>
    <property type="match status" value="1"/>
</dbReference>
<dbReference type="Gene3D" id="3.40.440.10">
    <property type="entry name" value="Adenylosuccinate Synthetase, subunit A, domain 1"/>
    <property type="match status" value="1"/>
</dbReference>
<dbReference type="Gene3D" id="1.10.300.10">
    <property type="entry name" value="Adenylosuccinate Synthetase, subunit A, domain 2"/>
    <property type="match status" value="1"/>
</dbReference>
<dbReference type="Gene3D" id="3.90.170.10">
    <property type="entry name" value="Adenylosuccinate Synthetase, subunit A, domain 3"/>
    <property type="match status" value="1"/>
</dbReference>
<dbReference type="HAMAP" id="MF_00011">
    <property type="entry name" value="Adenylosucc_synth"/>
    <property type="match status" value="1"/>
</dbReference>
<dbReference type="InterPro" id="IPR018220">
    <property type="entry name" value="Adenylosuccin_syn_GTP-bd"/>
</dbReference>
<dbReference type="InterPro" id="IPR042109">
    <property type="entry name" value="Adenylosuccinate_synth_dom1"/>
</dbReference>
<dbReference type="InterPro" id="IPR042110">
    <property type="entry name" value="Adenylosuccinate_synth_dom2"/>
</dbReference>
<dbReference type="InterPro" id="IPR042111">
    <property type="entry name" value="Adenylosuccinate_synth_dom3"/>
</dbReference>
<dbReference type="InterPro" id="IPR001114">
    <property type="entry name" value="Adenylosuccinate_synthetase"/>
</dbReference>
<dbReference type="InterPro" id="IPR027417">
    <property type="entry name" value="P-loop_NTPase"/>
</dbReference>
<dbReference type="NCBIfam" id="NF002223">
    <property type="entry name" value="PRK01117.1"/>
    <property type="match status" value="1"/>
</dbReference>
<dbReference type="NCBIfam" id="TIGR00184">
    <property type="entry name" value="purA"/>
    <property type="match status" value="1"/>
</dbReference>
<dbReference type="PANTHER" id="PTHR11846">
    <property type="entry name" value="ADENYLOSUCCINATE SYNTHETASE"/>
    <property type="match status" value="1"/>
</dbReference>
<dbReference type="PANTHER" id="PTHR11846:SF0">
    <property type="entry name" value="ADENYLOSUCCINATE SYNTHETASE"/>
    <property type="match status" value="1"/>
</dbReference>
<dbReference type="Pfam" id="PF00709">
    <property type="entry name" value="Adenylsucc_synt"/>
    <property type="match status" value="1"/>
</dbReference>
<dbReference type="SMART" id="SM00788">
    <property type="entry name" value="Adenylsucc_synt"/>
    <property type="match status" value="1"/>
</dbReference>
<dbReference type="SUPFAM" id="SSF52540">
    <property type="entry name" value="P-loop containing nucleoside triphosphate hydrolases"/>
    <property type="match status" value="1"/>
</dbReference>
<dbReference type="PROSITE" id="PS01266">
    <property type="entry name" value="ADENYLOSUCCIN_SYN_1"/>
    <property type="match status" value="1"/>
</dbReference>
<keyword id="KW-0963">Cytoplasm</keyword>
<keyword id="KW-0342">GTP-binding</keyword>
<keyword id="KW-0436">Ligase</keyword>
<keyword id="KW-0460">Magnesium</keyword>
<keyword id="KW-0479">Metal-binding</keyword>
<keyword id="KW-0547">Nucleotide-binding</keyword>
<keyword id="KW-0658">Purine biosynthesis</keyword>
<keyword id="KW-1185">Reference proteome</keyword>
<protein>
    <recommendedName>
        <fullName evidence="1">Adenylosuccinate synthetase 1</fullName>
        <shortName evidence="1">AMPSase 1</shortName>
        <shortName evidence="1">AdSS 1</shortName>
        <ecNumber evidence="1">6.3.4.4</ecNumber>
    </recommendedName>
    <alternativeName>
        <fullName evidence="1">IMP--aspartate ligase 1</fullName>
    </alternativeName>
</protein>
<feature type="chain" id="PRO_0000095165" description="Adenylosuccinate synthetase 1">
    <location>
        <begin position="1"/>
        <end position="432"/>
    </location>
</feature>
<feature type="active site" description="Proton acceptor" evidence="1">
    <location>
        <position position="13"/>
    </location>
</feature>
<feature type="active site" description="Proton donor" evidence="1">
    <location>
        <position position="41"/>
    </location>
</feature>
<feature type="binding site" evidence="1">
    <location>
        <begin position="12"/>
        <end position="18"/>
    </location>
    <ligand>
        <name>GTP</name>
        <dbReference type="ChEBI" id="CHEBI:37565"/>
    </ligand>
</feature>
<feature type="binding site" description="in other chain" evidence="1">
    <location>
        <begin position="13"/>
        <end position="16"/>
    </location>
    <ligand>
        <name>IMP</name>
        <dbReference type="ChEBI" id="CHEBI:58053"/>
        <note>ligand shared between dimeric partners</note>
    </ligand>
</feature>
<feature type="binding site" evidence="1">
    <location>
        <position position="13"/>
    </location>
    <ligand>
        <name>Mg(2+)</name>
        <dbReference type="ChEBI" id="CHEBI:18420"/>
    </ligand>
</feature>
<feature type="binding site" description="in other chain" evidence="1">
    <location>
        <begin position="38"/>
        <end position="41"/>
    </location>
    <ligand>
        <name>IMP</name>
        <dbReference type="ChEBI" id="CHEBI:58053"/>
        <note>ligand shared between dimeric partners</note>
    </ligand>
</feature>
<feature type="binding site" evidence="1">
    <location>
        <begin position="40"/>
        <end position="42"/>
    </location>
    <ligand>
        <name>GTP</name>
        <dbReference type="ChEBI" id="CHEBI:37565"/>
    </ligand>
</feature>
<feature type="binding site" evidence="1">
    <location>
        <position position="40"/>
    </location>
    <ligand>
        <name>Mg(2+)</name>
        <dbReference type="ChEBI" id="CHEBI:18420"/>
    </ligand>
</feature>
<feature type="binding site" description="in other chain" evidence="1">
    <location>
        <position position="128"/>
    </location>
    <ligand>
        <name>IMP</name>
        <dbReference type="ChEBI" id="CHEBI:58053"/>
        <note>ligand shared between dimeric partners</note>
    </ligand>
</feature>
<feature type="binding site" evidence="1">
    <location>
        <position position="142"/>
    </location>
    <ligand>
        <name>IMP</name>
        <dbReference type="ChEBI" id="CHEBI:58053"/>
        <note>ligand shared between dimeric partners</note>
    </ligand>
</feature>
<feature type="binding site" description="in other chain" evidence="1">
    <location>
        <position position="222"/>
    </location>
    <ligand>
        <name>IMP</name>
        <dbReference type="ChEBI" id="CHEBI:58053"/>
        <note>ligand shared between dimeric partners</note>
    </ligand>
</feature>
<feature type="binding site" description="in other chain" evidence="1">
    <location>
        <position position="237"/>
    </location>
    <ligand>
        <name>IMP</name>
        <dbReference type="ChEBI" id="CHEBI:58053"/>
        <note>ligand shared between dimeric partners</note>
    </ligand>
</feature>
<feature type="binding site" evidence="1">
    <location>
        <begin position="297"/>
        <end position="303"/>
    </location>
    <ligand>
        <name>substrate</name>
    </ligand>
</feature>
<feature type="binding site" description="in other chain" evidence="1">
    <location>
        <position position="301"/>
    </location>
    <ligand>
        <name>IMP</name>
        <dbReference type="ChEBI" id="CHEBI:58053"/>
        <note>ligand shared between dimeric partners</note>
    </ligand>
</feature>
<feature type="binding site" evidence="1">
    <location>
        <position position="303"/>
    </location>
    <ligand>
        <name>GTP</name>
        <dbReference type="ChEBI" id="CHEBI:37565"/>
    </ligand>
</feature>
<feature type="binding site" evidence="1">
    <location>
        <begin position="329"/>
        <end position="331"/>
    </location>
    <ligand>
        <name>GTP</name>
        <dbReference type="ChEBI" id="CHEBI:37565"/>
    </ligand>
</feature>
<feature type="binding site" evidence="1">
    <location>
        <begin position="411"/>
        <end position="413"/>
    </location>
    <ligand>
        <name>GTP</name>
        <dbReference type="ChEBI" id="CHEBI:37565"/>
    </ligand>
</feature>
<name>PURA1_CHRVO</name>
<organism>
    <name type="scientific">Chromobacterium violaceum (strain ATCC 12472 / DSM 30191 / JCM 1249 / CCUG 213 / NBRC 12614 / NCIMB 9131 / NCTC 9757 / MK)</name>
    <dbReference type="NCBI Taxonomy" id="243365"/>
    <lineage>
        <taxon>Bacteria</taxon>
        <taxon>Pseudomonadati</taxon>
        <taxon>Pseudomonadota</taxon>
        <taxon>Betaproteobacteria</taxon>
        <taxon>Neisseriales</taxon>
        <taxon>Chromobacteriaceae</taxon>
        <taxon>Chromobacterium</taxon>
    </lineage>
</organism>